<organism>
    <name type="scientific">Danio rerio</name>
    <name type="common">Zebrafish</name>
    <name type="synonym">Brachydanio rerio</name>
    <dbReference type="NCBI Taxonomy" id="7955"/>
    <lineage>
        <taxon>Eukaryota</taxon>
        <taxon>Metazoa</taxon>
        <taxon>Chordata</taxon>
        <taxon>Craniata</taxon>
        <taxon>Vertebrata</taxon>
        <taxon>Euteleostomi</taxon>
        <taxon>Actinopterygii</taxon>
        <taxon>Neopterygii</taxon>
        <taxon>Teleostei</taxon>
        <taxon>Ostariophysi</taxon>
        <taxon>Cypriniformes</taxon>
        <taxon>Danionidae</taxon>
        <taxon>Danioninae</taxon>
        <taxon>Danio</taxon>
    </lineage>
</organism>
<protein>
    <recommendedName>
        <fullName>Optineurin</fullName>
    </recommendedName>
</protein>
<proteinExistence type="evidence at transcript level"/>
<gene>
    <name type="primary">optn</name>
    <name type="ORF">si:ch211-240l19.3</name>
    <name type="ORF">zgc:66386</name>
    <name type="ORF">zgc:77868</name>
</gene>
<dbReference type="EMBL" id="BX321885">
    <property type="protein sequence ID" value="CAI11882.1"/>
    <property type="status" value="ALT_SEQ"/>
    <property type="molecule type" value="Genomic_DNA"/>
</dbReference>
<dbReference type="EMBL" id="BC055628">
    <property type="protein sequence ID" value="AAH55628.1"/>
    <property type="molecule type" value="mRNA"/>
</dbReference>
<dbReference type="EMBL" id="BC063986">
    <property type="protein sequence ID" value="AAH63986.1"/>
    <property type="molecule type" value="mRNA"/>
</dbReference>
<dbReference type="RefSeq" id="NP_001093536.2">
    <property type="nucleotide sequence ID" value="NM_001100066.2"/>
</dbReference>
<dbReference type="SMR" id="Q5RI56"/>
<dbReference type="FunCoup" id="Q5RI56">
    <property type="interactions" value="358"/>
</dbReference>
<dbReference type="STRING" id="7955.ENSDARP00000020714"/>
<dbReference type="iPTMnet" id="Q5RI56"/>
<dbReference type="PaxDb" id="7955-ENSDARP00000099052"/>
<dbReference type="GeneID" id="336159"/>
<dbReference type="KEGG" id="dre:336159"/>
<dbReference type="AGR" id="ZFIN:ZDB-GENE-030131-8103"/>
<dbReference type="CTD" id="10133"/>
<dbReference type="ZFIN" id="ZDB-GENE-030131-8103">
    <property type="gene designation" value="optn"/>
</dbReference>
<dbReference type="eggNOG" id="ENOG502QTG2">
    <property type="taxonomic scope" value="Eukaryota"/>
</dbReference>
<dbReference type="InParanoid" id="Q5RI56"/>
<dbReference type="OrthoDB" id="6343844at2759"/>
<dbReference type="PhylomeDB" id="Q5RI56"/>
<dbReference type="Reactome" id="R-DRE-2565942">
    <property type="pathway name" value="Regulation of PLK1 Activity at G2/M Transition"/>
</dbReference>
<dbReference type="Reactome" id="R-DRE-5205685">
    <property type="pathway name" value="PINK1-PRKN Mediated Mitophagy"/>
</dbReference>
<dbReference type="Reactome" id="R-DRE-5357905">
    <property type="pathway name" value="Regulation of TNFR1 signaling"/>
</dbReference>
<dbReference type="PRO" id="PR:Q5RI56"/>
<dbReference type="Proteomes" id="UP000000437">
    <property type="component" value="Alternate scaffold 4"/>
</dbReference>
<dbReference type="Proteomes" id="UP000000437">
    <property type="component" value="Chromosome 4"/>
</dbReference>
<dbReference type="GO" id="GO:0005776">
    <property type="term" value="C:autophagosome"/>
    <property type="evidence" value="ECO:0007669"/>
    <property type="project" value="UniProtKB-SubCell"/>
</dbReference>
<dbReference type="GO" id="GO:0005737">
    <property type="term" value="C:cytoplasm"/>
    <property type="evidence" value="ECO:0000318"/>
    <property type="project" value="GO_Central"/>
</dbReference>
<dbReference type="GO" id="GO:0005794">
    <property type="term" value="C:Golgi apparatus"/>
    <property type="evidence" value="ECO:0000250"/>
    <property type="project" value="UniProtKB"/>
</dbReference>
<dbReference type="GO" id="GO:0005634">
    <property type="term" value="C:nucleus"/>
    <property type="evidence" value="ECO:0000318"/>
    <property type="project" value="GO_Central"/>
</dbReference>
<dbReference type="GO" id="GO:0048471">
    <property type="term" value="C:perinuclear region of cytoplasm"/>
    <property type="evidence" value="ECO:0007669"/>
    <property type="project" value="UniProtKB-SubCell"/>
</dbReference>
<dbReference type="GO" id="GO:0055037">
    <property type="term" value="C:recycling endosome"/>
    <property type="evidence" value="ECO:0007669"/>
    <property type="project" value="UniProtKB-SubCell"/>
</dbReference>
<dbReference type="GO" id="GO:0070530">
    <property type="term" value="F:K63-linked polyubiquitin modification-dependent protein binding"/>
    <property type="evidence" value="ECO:0000318"/>
    <property type="project" value="GO_Central"/>
</dbReference>
<dbReference type="GO" id="GO:0008270">
    <property type="term" value="F:zinc ion binding"/>
    <property type="evidence" value="ECO:0007669"/>
    <property type="project" value="UniProtKB-KW"/>
</dbReference>
<dbReference type="GO" id="GO:0007409">
    <property type="term" value="P:axonogenesis"/>
    <property type="evidence" value="ECO:0000315"/>
    <property type="project" value="ZFIN"/>
</dbReference>
<dbReference type="GO" id="GO:0042742">
    <property type="term" value="P:defense response to bacterium"/>
    <property type="evidence" value="ECO:0000315"/>
    <property type="project" value="ZFIN"/>
</dbReference>
<dbReference type="GO" id="GO:0090161">
    <property type="term" value="P:Golgi ribbon formation"/>
    <property type="evidence" value="ECO:0000318"/>
    <property type="project" value="GO_Central"/>
</dbReference>
<dbReference type="GO" id="GO:0034067">
    <property type="term" value="P:protein localization to Golgi apparatus"/>
    <property type="evidence" value="ECO:0000318"/>
    <property type="project" value="GO_Central"/>
</dbReference>
<dbReference type="GO" id="GO:0043122">
    <property type="term" value="P:regulation of canonical NF-kappaB signal transduction"/>
    <property type="evidence" value="ECO:0000318"/>
    <property type="project" value="GO_Central"/>
</dbReference>
<dbReference type="GO" id="GO:0051648">
    <property type="term" value="P:vesicle localization"/>
    <property type="evidence" value="ECO:0000315"/>
    <property type="project" value="ZFIN"/>
</dbReference>
<dbReference type="CDD" id="cd09803">
    <property type="entry name" value="UBAN"/>
    <property type="match status" value="1"/>
</dbReference>
<dbReference type="FunFam" id="1.20.5.390:FF:000002">
    <property type="entry name" value="NF-kappa-B essential modulator isoform X1"/>
    <property type="match status" value="1"/>
</dbReference>
<dbReference type="FunFam" id="1.20.5.390:FF:000010">
    <property type="entry name" value="Optineurin"/>
    <property type="match status" value="1"/>
</dbReference>
<dbReference type="FunFam" id="1.20.5.990:FF:000002">
    <property type="entry name" value="Optineurin"/>
    <property type="match status" value="1"/>
</dbReference>
<dbReference type="Gene3D" id="1.20.5.390">
    <property type="entry name" value="L1 transposable element, trimerization domain"/>
    <property type="match status" value="2"/>
</dbReference>
<dbReference type="Gene3D" id="1.20.5.990">
    <property type="entry name" value="Nemo cc2-lz domain - 1d5 darpin complex"/>
    <property type="match status" value="1"/>
</dbReference>
<dbReference type="InterPro" id="IPR032419">
    <property type="entry name" value="CC2-LZ_dom"/>
</dbReference>
<dbReference type="InterPro" id="IPR021063">
    <property type="entry name" value="NEMO_N"/>
</dbReference>
<dbReference type="InterPro" id="IPR034735">
    <property type="entry name" value="NEMO_ZF"/>
</dbReference>
<dbReference type="InterPro" id="IPR051301">
    <property type="entry name" value="Optineurin/NFkB_EssMod"/>
</dbReference>
<dbReference type="PANTHER" id="PTHR31553">
    <property type="entry name" value="NF-KAPPA-B ESSENTIAL MODULATOR"/>
    <property type="match status" value="1"/>
</dbReference>
<dbReference type="PANTHER" id="PTHR31553:SF2">
    <property type="entry name" value="OPTINEURIN"/>
    <property type="match status" value="1"/>
</dbReference>
<dbReference type="Pfam" id="PF16516">
    <property type="entry name" value="CC2-LZ"/>
    <property type="match status" value="1"/>
</dbReference>
<dbReference type="Pfam" id="PF11577">
    <property type="entry name" value="NEMO"/>
    <property type="match status" value="1"/>
</dbReference>
<dbReference type="Pfam" id="PF18414">
    <property type="entry name" value="zf_C2H2_10"/>
    <property type="match status" value="1"/>
</dbReference>
<dbReference type="PROSITE" id="PS51801">
    <property type="entry name" value="ZF_CCHC_NOA"/>
    <property type="match status" value="1"/>
</dbReference>
<feature type="chain" id="PRO_0000058064" description="Optineurin">
    <location>
        <begin position="1"/>
        <end position="517"/>
    </location>
</feature>
<feature type="zinc finger region" description="CCHC NOA-type" evidence="4">
    <location>
        <begin position="487"/>
        <end position="517"/>
    </location>
</feature>
<feature type="region of interest" description="Disordered" evidence="5">
    <location>
        <begin position="216"/>
        <end position="237"/>
    </location>
</feature>
<feature type="region of interest" description="Disordered" evidence="5">
    <location>
        <begin position="454"/>
        <end position="488"/>
    </location>
</feature>
<feature type="coiled-coil region" evidence="3">
    <location>
        <begin position="15"/>
        <end position="127"/>
    </location>
</feature>
<feature type="coiled-coil region" evidence="3">
    <location>
        <begin position="174"/>
        <end position="453"/>
    </location>
</feature>
<feature type="compositionally biased region" description="Polar residues" evidence="5">
    <location>
        <begin position="222"/>
        <end position="237"/>
    </location>
</feature>
<feature type="binding site" evidence="4">
    <location>
        <position position="495"/>
    </location>
    <ligand>
        <name>Zn(2+)</name>
        <dbReference type="ChEBI" id="CHEBI:29105"/>
    </ligand>
</feature>
<feature type="binding site" evidence="4">
    <location>
        <position position="498"/>
    </location>
    <ligand>
        <name>Zn(2+)</name>
        <dbReference type="ChEBI" id="CHEBI:29105"/>
    </ligand>
</feature>
<feature type="binding site" evidence="4">
    <location>
        <position position="511"/>
    </location>
    <ligand>
        <name>Zn(2+)</name>
        <dbReference type="ChEBI" id="CHEBI:29105"/>
    </ligand>
</feature>
<feature type="binding site" evidence="4">
    <location>
        <position position="515"/>
    </location>
    <ligand>
        <name>Zn(2+)</name>
        <dbReference type="ChEBI" id="CHEBI:29105"/>
    </ligand>
</feature>
<feature type="splice variant" id="VSP_013265" description="In isoform 2." evidence="6">
    <location>
        <begin position="151"/>
        <end position="231"/>
    </location>
</feature>
<feature type="sequence conflict" description="In Ref. 2; AAH55628." evidence="7" ref="2">
    <original>K</original>
    <variation>R</variation>
    <location>
        <position position="94"/>
    </location>
</feature>
<feature type="sequence conflict" description="In Ref. 2; AAH55628." evidence="7" ref="2">
    <original>N</original>
    <variation>S</variation>
    <location>
        <position position="325"/>
    </location>
</feature>
<feature type="sequence conflict" description="In Ref. 2; AAH55628." evidence="7" ref="2">
    <original>S</original>
    <variation>G</variation>
    <location>
        <position position="353"/>
    </location>
</feature>
<comment type="function">
    <text evidence="1 2">Probably part of the TNF-alpha signaling pathway that can shift the equilibrium toward induction of cell death. May act by regulating membrane trafficking and cellular morphogenesis.</text>
</comment>
<comment type="subcellular location">
    <subcellularLocation>
        <location evidence="1">Cytoplasm</location>
    </subcellularLocation>
    <subcellularLocation>
        <location evidence="1">Cytoplasm</location>
        <location evidence="1">Perinuclear region</location>
    </subcellularLocation>
    <subcellularLocation>
        <location evidence="2">Golgi apparatus</location>
    </subcellularLocation>
    <subcellularLocation>
        <location evidence="1">Golgi apparatus</location>
        <location evidence="1">trans-Golgi network</location>
    </subcellularLocation>
    <subcellularLocation>
        <location evidence="1">Cytoplasmic vesicle</location>
    </subcellularLocation>
    <subcellularLocation>
        <location evidence="1">Recycling endosome</location>
    </subcellularLocation>
    <subcellularLocation>
        <location evidence="1">Cytoplasmic vesicle</location>
        <location evidence="1">Autophagosome</location>
    </subcellularLocation>
</comment>
<comment type="alternative products">
    <event type="alternative splicing"/>
    <isoform>
        <id>Q5RI56-1</id>
        <name>1</name>
        <sequence type="displayed"/>
    </isoform>
    <isoform>
        <id>Q5RI56-2</id>
        <name>2</name>
        <sequence type="described" ref="VSP_013265"/>
    </isoform>
</comment>
<comment type="sequence caution" evidence="7">
    <conflict type="erroneous gene model prediction">
        <sequence resource="EMBL-CDS" id="CAI11882"/>
    </conflict>
</comment>
<name>OPTN_DANRE</name>
<keyword id="KW-0025">Alternative splicing</keyword>
<keyword id="KW-0175">Coiled coil</keyword>
<keyword id="KW-0963">Cytoplasm</keyword>
<keyword id="KW-0968">Cytoplasmic vesicle</keyword>
<keyword id="KW-0967">Endosome</keyword>
<keyword id="KW-0333">Golgi apparatus</keyword>
<keyword id="KW-0479">Metal-binding</keyword>
<keyword id="KW-1185">Reference proteome</keyword>
<keyword id="KW-0862">Zinc</keyword>
<keyword id="KW-0863">Zinc-finger</keyword>
<accession>Q5RI56</accession>
<accession>Q6P3H5</accession>
<accession>Q7SXF4</accession>
<sequence>MNGDISHPRGSGPGNLGSLEETLQQMNTLIKENRDLKEALKQTNLSMKERFEGLSAWKEKQKEERDFLEQRLEEARTRLNTMDVENEALKNQVKELEKSGAECLHTELEALRGQILRIQAEKNDLVAMNSELQLKMGQGSPSNSFIEIRIADDDLKVTKDLSSVPEASAFSMPKAESEEQTVRQLLRSLRAETDEKERLQLTLQEARGRIAELESKLEHADSSAQTSLPSAAETNASTEVKNLEDQLLKLCNELKQAQIKLDEAESMKRNLQDRCKDLEQDLGTLKTQLGDKQKVQAENDCLKVQMESLQAAIKLEQKKTQDEKNNLNQLKDAYTKLFEDYSELQEEKKKRESCVSKDDYDELQTRFATAEKALADKQQKIDEMKMELFQKEKDLETISVFQAQAEIYSSDFYAERAAREKIHEEKERLATQLEYVKKQNSQLQEEMESLGRHSMSEMQRRHVPRGANPQGPTAPNNLPGGRGEWQQQNIPDHACPKCGEVLPDLDSLQIHIMDCII</sequence>
<evidence type="ECO:0000250" key="1"/>
<evidence type="ECO:0000250" key="2">
    <source>
        <dbReference type="UniProtKB" id="Q96CV9"/>
    </source>
</evidence>
<evidence type="ECO:0000255" key="3"/>
<evidence type="ECO:0000255" key="4">
    <source>
        <dbReference type="PROSITE-ProRule" id="PRU01142"/>
    </source>
</evidence>
<evidence type="ECO:0000256" key="5">
    <source>
        <dbReference type="SAM" id="MobiDB-lite"/>
    </source>
</evidence>
<evidence type="ECO:0000303" key="6">
    <source ref="2"/>
</evidence>
<evidence type="ECO:0000305" key="7"/>
<reference key="1">
    <citation type="journal article" date="2013" name="Nature">
        <title>The zebrafish reference genome sequence and its relationship to the human genome.</title>
        <authorList>
            <person name="Howe K."/>
            <person name="Clark M.D."/>
            <person name="Torroja C.F."/>
            <person name="Torrance J."/>
            <person name="Berthelot C."/>
            <person name="Muffato M."/>
            <person name="Collins J.E."/>
            <person name="Humphray S."/>
            <person name="McLaren K."/>
            <person name="Matthews L."/>
            <person name="McLaren S."/>
            <person name="Sealy I."/>
            <person name="Caccamo M."/>
            <person name="Churcher C."/>
            <person name="Scott C."/>
            <person name="Barrett J.C."/>
            <person name="Koch R."/>
            <person name="Rauch G.J."/>
            <person name="White S."/>
            <person name="Chow W."/>
            <person name="Kilian B."/>
            <person name="Quintais L.T."/>
            <person name="Guerra-Assuncao J.A."/>
            <person name="Zhou Y."/>
            <person name="Gu Y."/>
            <person name="Yen J."/>
            <person name="Vogel J.H."/>
            <person name="Eyre T."/>
            <person name="Redmond S."/>
            <person name="Banerjee R."/>
            <person name="Chi J."/>
            <person name="Fu B."/>
            <person name="Langley E."/>
            <person name="Maguire S.F."/>
            <person name="Laird G.K."/>
            <person name="Lloyd D."/>
            <person name="Kenyon E."/>
            <person name="Donaldson S."/>
            <person name="Sehra H."/>
            <person name="Almeida-King J."/>
            <person name="Loveland J."/>
            <person name="Trevanion S."/>
            <person name="Jones M."/>
            <person name="Quail M."/>
            <person name="Willey D."/>
            <person name="Hunt A."/>
            <person name="Burton J."/>
            <person name="Sims S."/>
            <person name="McLay K."/>
            <person name="Plumb B."/>
            <person name="Davis J."/>
            <person name="Clee C."/>
            <person name="Oliver K."/>
            <person name="Clark R."/>
            <person name="Riddle C."/>
            <person name="Elliot D."/>
            <person name="Threadgold G."/>
            <person name="Harden G."/>
            <person name="Ware D."/>
            <person name="Begum S."/>
            <person name="Mortimore B."/>
            <person name="Kerry G."/>
            <person name="Heath P."/>
            <person name="Phillimore B."/>
            <person name="Tracey A."/>
            <person name="Corby N."/>
            <person name="Dunn M."/>
            <person name="Johnson C."/>
            <person name="Wood J."/>
            <person name="Clark S."/>
            <person name="Pelan S."/>
            <person name="Griffiths G."/>
            <person name="Smith M."/>
            <person name="Glithero R."/>
            <person name="Howden P."/>
            <person name="Barker N."/>
            <person name="Lloyd C."/>
            <person name="Stevens C."/>
            <person name="Harley J."/>
            <person name="Holt K."/>
            <person name="Panagiotidis G."/>
            <person name="Lovell J."/>
            <person name="Beasley H."/>
            <person name="Henderson C."/>
            <person name="Gordon D."/>
            <person name="Auger K."/>
            <person name="Wright D."/>
            <person name="Collins J."/>
            <person name="Raisen C."/>
            <person name="Dyer L."/>
            <person name="Leung K."/>
            <person name="Robertson L."/>
            <person name="Ambridge K."/>
            <person name="Leongamornlert D."/>
            <person name="McGuire S."/>
            <person name="Gilderthorp R."/>
            <person name="Griffiths C."/>
            <person name="Manthravadi D."/>
            <person name="Nichol S."/>
            <person name="Barker G."/>
            <person name="Whitehead S."/>
            <person name="Kay M."/>
            <person name="Brown J."/>
            <person name="Murnane C."/>
            <person name="Gray E."/>
            <person name="Humphries M."/>
            <person name="Sycamore N."/>
            <person name="Barker D."/>
            <person name="Saunders D."/>
            <person name="Wallis J."/>
            <person name="Babbage A."/>
            <person name="Hammond S."/>
            <person name="Mashreghi-Mohammadi M."/>
            <person name="Barr L."/>
            <person name="Martin S."/>
            <person name="Wray P."/>
            <person name="Ellington A."/>
            <person name="Matthews N."/>
            <person name="Ellwood M."/>
            <person name="Woodmansey R."/>
            <person name="Clark G."/>
            <person name="Cooper J."/>
            <person name="Tromans A."/>
            <person name="Grafham D."/>
            <person name="Skuce C."/>
            <person name="Pandian R."/>
            <person name="Andrews R."/>
            <person name="Harrison E."/>
            <person name="Kimberley A."/>
            <person name="Garnett J."/>
            <person name="Fosker N."/>
            <person name="Hall R."/>
            <person name="Garner P."/>
            <person name="Kelly D."/>
            <person name="Bird C."/>
            <person name="Palmer S."/>
            <person name="Gehring I."/>
            <person name="Berger A."/>
            <person name="Dooley C.M."/>
            <person name="Ersan-Urun Z."/>
            <person name="Eser C."/>
            <person name="Geiger H."/>
            <person name="Geisler M."/>
            <person name="Karotki L."/>
            <person name="Kirn A."/>
            <person name="Konantz J."/>
            <person name="Konantz M."/>
            <person name="Oberlander M."/>
            <person name="Rudolph-Geiger S."/>
            <person name="Teucke M."/>
            <person name="Lanz C."/>
            <person name="Raddatz G."/>
            <person name="Osoegawa K."/>
            <person name="Zhu B."/>
            <person name="Rapp A."/>
            <person name="Widaa S."/>
            <person name="Langford C."/>
            <person name="Yang F."/>
            <person name="Schuster S.C."/>
            <person name="Carter N.P."/>
            <person name="Harrow J."/>
            <person name="Ning Z."/>
            <person name="Herrero J."/>
            <person name="Searle S.M."/>
            <person name="Enright A."/>
            <person name="Geisler R."/>
            <person name="Plasterk R.H."/>
            <person name="Lee C."/>
            <person name="Westerfield M."/>
            <person name="de Jong P.J."/>
            <person name="Zon L.I."/>
            <person name="Postlethwait J.H."/>
            <person name="Nusslein-Volhard C."/>
            <person name="Hubbard T.J."/>
            <person name="Roest Crollius H."/>
            <person name="Rogers J."/>
            <person name="Stemple D.L."/>
        </authorList>
    </citation>
    <scope>NUCLEOTIDE SEQUENCE [LARGE SCALE GENOMIC DNA]</scope>
    <source>
        <strain>Tuebingen</strain>
    </source>
</reference>
<reference key="2">
    <citation type="submission" date="2003-12" db="EMBL/GenBank/DDBJ databases">
        <authorList>
            <consortium name="NIH - Zebrafish Gene Collection (ZGC) project"/>
        </authorList>
    </citation>
    <scope>NUCLEOTIDE SEQUENCE [LARGE SCALE MRNA] (ISOFORMS 1 AND 2)</scope>
    <source>
        <strain>SJD</strain>
    </source>
</reference>